<proteinExistence type="inferred from homology"/>
<dbReference type="EMBL" id="AE017223">
    <property type="protein sequence ID" value="AAX74710.1"/>
    <property type="molecule type" value="Genomic_DNA"/>
</dbReference>
<dbReference type="RefSeq" id="WP_002964493.1">
    <property type="nucleotide sequence ID" value="NC_006932.1"/>
</dbReference>
<dbReference type="EnsemblBacteria" id="AAX74710">
    <property type="protein sequence ID" value="AAX74710"/>
    <property type="gene ID" value="BruAb1_1379"/>
</dbReference>
<dbReference type="KEGG" id="bmb:BruAb1_1379"/>
<dbReference type="HOGENOM" id="CLU_008142_4_2_5"/>
<dbReference type="Proteomes" id="UP000000540">
    <property type="component" value="Chromosome I"/>
</dbReference>
<dbReference type="GO" id="GO:0005886">
    <property type="term" value="C:plasma membrane"/>
    <property type="evidence" value="ECO:0007669"/>
    <property type="project" value="UniProtKB-SubCell"/>
</dbReference>
<dbReference type="GO" id="GO:0015079">
    <property type="term" value="F:potassium ion transmembrane transporter activity"/>
    <property type="evidence" value="ECO:0007669"/>
    <property type="project" value="UniProtKB-UniRule"/>
</dbReference>
<dbReference type="GO" id="GO:0015293">
    <property type="term" value="F:symporter activity"/>
    <property type="evidence" value="ECO:0007669"/>
    <property type="project" value="UniProtKB-UniRule"/>
</dbReference>
<dbReference type="HAMAP" id="MF_01522">
    <property type="entry name" value="Kup"/>
    <property type="match status" value="1"/>
</dbReference>
<dbReference type="InterPro" id="IPR003855">
    <property type="entry name" value="K+_transporter"/>
</dbReference>
<dbReference type="InterPro" id="IPR053952">
    <property type="entry name" value="K_trans_C"/>
</dbReference>
<dbReference type="InterPro" id="IPR053951">
    <property type="entry name" value="K_trans_N"/>
</dbReference>
<dbReference type="InterPro" id="IPR023051">
    <property type="entry name" value="Kup"/>
</dbReference>
<dbReference type="PANTHER" id="PTHR30540:SF79">
    <property type="entry name" value="LOW AFFINITY POTASSIUM TRANSPORT SYSTEM PROTEIN KUP"/>
    <property type="match status" value="1"/>
</dbReference>
<dbReference type="PANTHER" id="PTHR30540">
    <property type="entry name" value="OSMOTIC STRESS POTASSIUM TRANSPORTER"/>
    <property type="match status" value="1"/>
</dbReference>
<dbReference type="Pfam" id="PF02705">
    <property type="entry name" value="K_trans"/>
    <property type="match status" value="1"/>
</dbReference>
<dbReference type="Pfam" id="PF22776">
    <property type="entry name" value="K_trans_C"/>
    <property type="match status" value="1"/>
</dbReference>
<protein>
    <recommendedName>
        <fullName evidence="1">Probable potassium transport system protein Kup</fullName>
    </recommendedName>
</protein>
<name>KUP_BRUAB</name>
<sequence length="651" mass="70413">MSGELNGNDTSAQAAVSAGSVLEGAAFADEGEQHNESMKTLVLGALGVVYGDIGTSPIYAFREALHAAATNGILARSDILGVVSLIFWALTLVVTVKYVLFVLRADNNGEGGILSLMALVRGALKGRPDLILGVGICGAALFFGDAVITPAISVLSAMEGLEIVAPNLTPFVVPAAVVILVTLFSVQKLGTGRVAIVFGPIMALWFVALGASGLWHIFDDPTVMAALNPYYAVRFLTVSPAVAFVTVGAVFLAMTGAEALYADLGHFGRKPIVRAWLWIVFPCLLLNYFGQAAFILSHGEAAALPFFQMIPSFALWPMVLLATAATVIASQAVITGAYSVARQAVQLNILPRLEIQHTSEKLHGQIYIPRVNLLLGLAVVILVLGFEKSSNLAAAYGIAVTGNMLVTTVLLYIAMTRIWNWRVSRALPIILGFLVIDMLFFSANIIKVHEGGWASIGIATVLVLIMWTWVRGTRHLFQKTRKAEVPLDLIVEQMAKRPPTIVPGTAVFLTGDPKSAPTALMHSLKHYKVLHENNVILTVVTASKPWVASADRARVSQYNERFMLVTLTFGYMQQPNIPRALGLCRRLGWKFDIMTTSFFLSRRSLKASVHSGMPLWQDKLFILLARTASDATEYFQIPTGRVVEIGTQVNI</sequence>
<organism>
    <name type="scientific">Brucella abortus biovar 1 (strain 9-941)</name>
    <dbReference type="NCBI Taxonomy" id="262698"/>
    <lineage>
        <taxon>Bacteria</taxon>
        <taxon>Pseudomonadati</taxon>
        <taxon>Pseudomonadota</taxon>
        <taxon>Alphaproteobacteria</taxon>
        <taxon>Hyphomicrobiales</taxon>
        <taxon>Brucellaceae</taxon>
        <taxon>Brucella/Ochrobactrum group</taxon>
        <taxon>Brucella</taxon>
    </lineage>
</organism>
<gene>
    <name evidence="1" type="primary">kup</name>
    <name type="ordered locus">BruAb1_1379</name>
</gene>
<comment type="function">
    <text evidence="1">Transport of potassium into the cell. Likely operates as a K(+):H(+) symporter.</text>
</comment>
<comment type="catalytic activity">
    <reaction evidence="1">
        <text>K(+)(in) + H(+)(in) = K(+)(out) + H(+)(out)</text>
        <dbReference type="Rhea" id="RHEA:28490"/>
        <dbReference type="ChEBI" id="CHEBI:15378"/>
        <dbReference type="ChEBI" id="CHEBI:29103"/>
    </reaction>
    <physiologicalReaction direction="right-to-left" evidence="1">
        <dbReference type="Rhea" id="RHEA:28492"/>
    </physiologicalReaction>
</comment>
<comment type="subcellular location">
    <subcellularLocation>
        <location evidence="1">Cell inner membrane</location>
        <topology evidence="1">Multi-pass membrane protein</topology>
    </subcellularLocation>
</comment>
<comment type="similarity">
    <text evidence="1">Belongs to the HAK/KUP transporter (TC 2.A.72) family.</text>
</comment>
<feature type="chain" id="PRO_0000209001" description="Probable potassium transport system protein Kup">
    <location>
        <begin position="1"/>
        <end position="651"/>
    </location>
</feature>
<feature type="transmembrane region" description="Helical" evidence="1">
    <location>
        <begin position="41"/>
        <end position="61"/>
    </location>
</feature>
<feature type="transmembrane region" description="Helical" evidence="1">
    <location>
        <begin position="82"/>
        <end position="102"/>
    </location>
</feature>
<feature type="transmembrane region" description="Helical" evidence="1">
    <location>
        <begin position="130"/>
        <end position="150"/>
    </location>
</feature>
<feature type="transmembrane region" description="Helical" evidence="1">
    <location>
        <begin position="163"/>
        <end position="183"/>
    </location>
</feature>
<feature type="transmembrane region" description="Helical" evidence="1">
    <location>
        <begin position="194"/>
        <end position="214"/>
    </location>
</feature>
<feature type="transmembrane region" description="Helical" evidence="1">
    <location>
        <begin position="235"/>
        <end position="255"/>
    </location>
</feature>
<feature type="transmembrane region" description="Helical" evidence="1">
    <location>
        <begin position="276"/>
        <end position="296"/>
    </location>
</feature>
<feature type="transmembrane region" description="Helical" evidence="1">
    <location>
        <begin position="309"/>
        <end position="329"/>
    </location>
</feature>
<feature type="transmembrane region" description="Helical" evidence="1">
    <location>
        <begin position="366"/>
        <end position="386"/>
    </location>
</feature>
<feature type="transmembrane region" description="Helical" evidence="1">
    <location>
        <begin position="395"/>
        <end position="415"/>
    </location>
</feature>
<feature type="transmembrane region" description="Helical" evidence="1">
    <location>
        <begin position="426"/>
        <end position="446"/>
    </location>
</feature>
<feature type="transmembrane region" description="Helical" evidence="1">
    <location>
        <begin position="450"/>
        <end position="470"/>
    </location>
</feature>
<accession>Q57CC4</accession>
<evidence type="ECO:0000255" key="1">
    <source>
        <dbReference type="HAMAP-Rule" id="MF_01522"/>
    </source>
</evidence>
<keyword id="KW-0997">Cell inner membrane</keyword>
<keyword id="KW-1003">Cell membrane</keyword>
<keyword id="KW-0406">Ion transport</keyword>
<keyword id="KW-0472">Membrane</keyword>
<keyword id="KW-0630">Potassium</keyword>
<keyword id="KW-0633">Potassium transport</keyword>
<keyword id="KW-0769">Symport</keyword>
<keyword id="KW-0812">Transmembrane</keyword>
<keyword id="KW-1133">Transmembrane helix</keyword>
<keyword id="KW-0813">Transport</keyword>
<reference key="1">
    <citation type="journal article" date="2005" name="J. Bacteriol.">
        <title>Completion of the genome sequence of Brucella abortus and comparison to the highly similar genomes of Brucella melitensis and Brucella suis.</title>
        <authorList>
            <person name="Halling S.M."/>
            <person name="Peterson-Burch B.D."/>
            <person name="Bricker B.J."/>
            <person name="Zuerner R.L."/>
            <person name="Qing Z."/>
            <person name="Li L.-L."/>
            <person name="Kapur V."/>
            <person name="Alt D.P."/>
            <person name="Olsen S.C."/>
        </authorList>
    </citation>
    <scope>NUCLEOTIDE SEQUENCE [LARGE SCALE GENOMIC DNA]</scope>
    <source>
        <strain>9-941</strain>
    </source>
</reference>